<proteinExistence type="evidence at protein level"/>
<keyword id="KW-0028">Amino-acid biosynthesis</keyword>
<keyword id="KW-0067">ATP-binding</keyword>
<keyword id="KW-0436">Ligase</keyword>
<keyword id="KW-0460">Magnesium</keyword>
<keyword id="KW-0479">Metal-binding</keyword>
<keyword id="KW-0547">Nucleotide-binding</keyword>
<protein>
    <recommendedName>
        <fullName evidence="5">3-methyl-D-ornithine--L-lysine ligase</fullName>
        <ecNumber evidence="3">6.3.2.59</ecNumber>
    </recommendedName>
    <alternativeName>
        <fullName evidence="5">(3R)-3-methyl-D-ornithine:L-lysine ligase</fullName>
    </alternativeName>
    <alternativeName>
        <fullName evidence="5">Pyrrolysine biosynthesis protein PylC</fullName>
    </alternativeName>
</protein>
<feature type="chain" id="PRO_0000454907" description="3-methyl-D-ornithine--L-lysine ligase">
    <location>
        <begin position="1"/>
        <end position="371"/>
    </location>
</feature>
<feature type="domain" description="ATP-grasp" evidence="2">
    <location>
        <begin position="93"/>
        <end position="277"/>
    </location>
</feature>
<feature type="binding site" evidence="1">
    <location>
        <position position="18"/>
    </location>
    <ligand>
        <name>ATP</name>
        <dbReference type="ChEBI" id="CHEBI:30616"/>
    </ligand>
</feature>
<feature type="binding site" evidence="1">
    <location>
        <begin position="19"/>
        <end position="20"/>
    </location>
    <ligand>
        <name>L-lysine</name>
        <dbReference type="ChEBI" id="CHEBI:32551"/>
    </ligand>
</feature>
<feature type="binding site" evidence="1">
    <location>
        <position position="39"/>
    </location>
    <ligand>
        <name>ATP</name>
        <dbReference type="ChEBI" id="CHEBI:30616"/>
    </ligand>
</feature>
<feature type="binding site" evidence="1">
    <location>
        <begin position="57"/>
        <end position="58"/>
    </location>
    <ligand>
        <name>ATP</name>
        <dbReference type="ChEBI" id="CHEBI:30616"/>
    </ligand>
</feature>
<feature type="binding site" evidence="1">
    <location>
        <begin position="80"/>
        <end position="81"/>
    </location>
    <ligand>
        <name>ATP</name>
        <dbReference type="ChEBI" id="CHEBI:30616"/>
    </ligand>
</feature>
<feature type="binding site" evidence="1">
    <location>
        <position position="80"/>
    </location>
    <ligand>
        <name>L-lysine</name>
        <dbReference type="ChEBI" id="CHEBI:32551"/>
    </ligand>
</feature>
<feature type="binding site" evidence="1">
    <location>
        <position position="112"/>
    </location>
    <ligand>
        <name>ADP</name>
        <dbReference type="ChEBI" id="CHEBI:456216"/>
    </ligand>
</feature>
<feature type="binding site" evidence="1">
    <location>
        <position position="139"/>
    </location>
    <ligand>
        <name>ADP</name>
        <dbReference type="ChEBI" id="CHEBI:456216"/>
    </ligand>
</feature>
<feature type="binding site" evidence="1">
    <location>
        <position position="146"/>
    </location>
    <ligand>
        <name>ADP</name>
        <dbReference type="ChEBI" id="CHEBI:456216"/>
    </ligand>
</feature>
<feature type="binding site" evidence="1">
    <location>
        <begin position="168"/>
        <end position="171"/>
    </location>
    <ligand>
        <name>ADP</name>
        <dbReference type="ChEBI" id="CHEBI:456216"/>
    </ligand>
</feature>
<feature type="binding site" evidence="1">
    <location>
        <begin position="177"/>
        <end position="179"/>
    </location>
    <ligand>
        <name>D-ornithine</name>
        <dbReference type="ChEBI" id="CHEBI:57668"/>
    </ligand>
</feature>
<feature type="binding site" evidence="1">
    <location>
        <position position="233"/>
    </location>
    <ligand>
        <name>D-ornithine</name>
        <dbReference type="ChEBI" id="CHEBI:57668"/>
    </ligand>
</feature>
<feature type="binding site" evidence="1">
    <location>
        <position position="235"/>
    </location>
    <ligand>
        <name>Mg(2+)</name>
        <dbReference type="ChEBI" id="CHEBI:18420"/>
        <label>1</label>
    </ligand>
</feature>
<feature type="binding site" evidence="1">
    <location>
        <position position="247"/>
    </location>
    <ligand>
        <name>ADP</name>
        <dbReference type="ChEBI" id="CHEBI:456216"/>
    </ligand>
</feature>
<feature type="binding site" evidence="1">
    <location>
        <position position="247"/>
    </location>
    <ligand>
        <name>Mg(2+)</name>
        <dbReference type="ChEBI" id="CHEBI:18420"/>
        <label>1</label>
    </ligand>
</feature>
<feature type="binding site" evidence="1">
    <location>
        <position position="247"/>
    </location>
    <ligand>
        <name>Mg(2+)</name>
        <dbReference type="ChEBI" id="CHEBI:18420"/>
        <label>2</label>
    </ligand>
</feature>
<feature type="binding site" evidence="1">
    <location>
        <position position="249"/>
    </location>
    <ligand>
        <name>Mg(2+)</name>
        <dbReference type="ChEBI" id="CHEBI:18420"/>
        <label>2</label>
    </ligand>
</feature>
<feature type="binding site" evidence="1">
    <location>
        <begin position="251"/>
        <end position="256"/>
    </location>
    <ligand>
        <name>D-ornithine</name>
        <dbReference type="ChEBI" id="CHEBI:57668"/>
    </ligand>
</feature>
<feature type="binding site" evidence="1">
    <location>
        <position position="254"/>
    </location>
    <ligand>
        <name>L-lysine</name>
        <dbReference type="ChEBI" id="CHEBI:32551"/>
    </ligand>
</feature>
<feature type="binding site" evidence="1">
    <location>
        <position position="310"/>
    </location>
    <ligand>
        <name>D-ornithine</name>
        <dbReference type="ChEBI" id="CHEBI:57668"/>
    </ligand>
</feature>
<feature type="binding site" evidence="1">
    <location>
        <position position="310"/>
    </location>
    <ligand>
        <name>L-lysine</name>
        <dbReference type="ChEBI" id="CHEBI:32551"/>
    </ligand>
</feature>
<dbReference type="EC" id="6.3.2.59" evidence="3"/>
<dbReference type="EMBL" id="AE008384">
    <property type="protein sequence ID" value="AAM31139.1"/>
    <property type="molecule type" value="Genomic_DNA"/>
</dbReference>
<dbReference type="RefSeq" id="WP_011033389.1">
    <property type="nucleotide sequence ID" value="NC_003901.1"/>
</dbReference>
<dbReference type="SMR" id="Q8PWY3"/>
<dbReference type="GeneID" id="82160485"/>
<dbReference type="KEGG" id="mma:MM_1443"/>
<dbReference type="PATRIC" id="fig|192952.21.peg.1669"/>
<dbReference type="eggNOG" id="arCOG01596">
    <property type="taxonomic scope" value="Archaea"/>
</dbReference>
<dbReference type="HOGENOM" id="CLU_707177_0_0_2"/>
<dbReference type="UniPathway" id="UPA01028"/>
<dbReference type="Proteomes" id="UP000000595">
    <property type="component" value="Chromosome"/>
</dbReference>
<dbReference type="GO" id="GO:0005829">
    <property type="term" value="C:cytosol"/>
    <property type="evidence" value="ECO:0007669"/>
    <property type="project" value="TreeGrafter"/>
</dbReference>
<dbReference type="GO" id="GO:0005524">
    <property type="term" value="F:ATP binding"/>
    <property type="evidence" value="ECO:0007669"/>
    <property type="project" value="UniProtKB-KW"/>
</dbReference>
<dbReference type="GO" id="GO:0016874">
    <property type="term" value="F:ligase activity"/>
    <property type="evidence" value="ECO:0007669"/>
    <property type="project" value="UniProtKB-KW"/>
</dbReference>
<dbReference type="GO" id="GO:0046872">
    <property type="term" value="F:metal ion binding"/>
    <property type="evidence" value="ECO:0007669"/>
    <property type="project" value="UniProtKB-KW"/>
</dbReference>
<dbReference type="GO" id="GO:0071524">
    <property type="term" value="P:pyrrolysine biosynthetic process"/>
    <property type="evidence" value="ECO:0007669"/>
    <property type="project" value="UniProtKB-UniPathway"/>
</dbReference>
<dbReference type="Gene3D" id="3.30.470.20">
    <property type="entry name" value="ATP-grasp fold, B domain"/>
    <property type="match status" value="1"/>
</dbReference>
<dbReference type="Gene3D" id="3.40.50.720">
    <property type="entry name" value="NAD(P)-binding Rossmann-like Domain"/>
    <property type="match status" value="1"/>
</dbReference>
<dbReference type="InterPro" id="IPR011761">
    <property type="entry name" value="ATP-grasp"/>
</dbReference>
<dbReference type="InterPro" id="IPR003806">
    <property type="entry name" value="ATP-grasp_PylC-type"/>
</dbReference>
<dbReference type="InterPro" id="IPR048764">
    <property type="entry name" value="PylC_N"/>
</dbReference>
<dbReference type="InterPro" id="IPR023890">
    <property type="entry name" value="Pyrrolys_PylC"/>
</dbReference>
<dbReference type="NCBIfam" id="TIGR03909">
    <property type="entry name" value="pyrrolys_PylC"/>
    <property type="match status" value="1"/>
</dbReference>
<dbReference type="PANTHER" id="PTHR43055">
    <property type="entry name" value="FORMATE-DEPENDENT PHOSPHORIBOSYLGLYCINAMIDE FORMYLTRANSFERASE"/>
    <property type="match status" value="1"/>
</dbReference>
<dbReference type="PANTHER" id="PTHR43055:SF1">
    <property type="entry name" value="FORMATE-DEPENDENT PHOSPHORIBOSYLGLYCINAMIDE FORMYLTRANSFERASE"/>
    <property type="match status" value="1"/>
</dbReference>
<dbReference type="Pfam" id="PF02655">
    <property type="entry name" value="ATP-grasp_3"/>
    <property type="match status" value="1"/>
</dbReference>
<dbReference type="Pfam" id="PF21360">
    <property type="entry name" value="PylC-like_N"/>
    <property type="match status" value="1"/>
</dbReference>
<dbReference type="SUPFAM" id="SSF56059">
    <property type="entry name" value="Glutathione synthetase ATP-binding domain-like"/>
    <property type="match status" value="1"/>
</dbReference>
<dbReference type="PROSITE" id="PS50975">
    <property type="entry name" value="ATP_GRASP"/>
    <property type="match status" value="1"/>
</dbReference>
<name>PYLC_METMA</name>
<accession>Q8PWY3</accession>
<comment type="function">
    <text evidence="3">Is required for the biosynthesis of pyrrolysine (PubMed:21525873). Catalyzes the ATP-dependent ligation between (3R)-3-methyl-D-ornithine and L-lysine, leading to (3R)-3-methyl-D-ornithyl-N6-L-lysine (PubMed:21525873). Is also involved in the synthesis of pyrroline-carboxy-lysine (Pcl), a demethylated form of pyrrolysine that is generated by the pyrrolysine biosynthetic enzymes when the growth media is supplemented with D-ornithine (PubMed:21525873).</text>
</comment>
<comment type="catalytic activity">
    <reaction evidence="3">
        <text>(3R)-3-methyl-D-ornithine + L-lysine + ATP = (3R)-3-methyl-D-ornithyl-N(6)-L-lysine + ADP + phosphate + H(+)</text>
        <dbReference type="Rhea" id="RHEA:32763"/>
        <dbReference type="ChEBI" id="CHEBI:15378"/>
        <dbReference type="ChEBI" id="CHEBI:30616"/>
        <dbReference type="ChEBI" id="CHEBI:32551"/>
        <dbReference type="ChEBI" id="CHEBI:43474"/>
        <dbReference type="ChEBI" id="CHEBI:64642"/>
        <dbReference type="ChEBI" id="CHEBI:64643"/>
        <dbReference type="ChEBI" id="CHEBI:456216"/>
        <dbReference type="EC" id="6.3.2.59"/>
    </reaction>
    <physiologicalReaction direction="left-to-right" evidence="3">
        <dbReference type="Rhea" id="RHEA:32764"/>
    </physiologicalReaction>
</comment>
<comment type="cofactor">
    <cofactor evidence="1">
        <name>Mg(2+)</name>
        <dbReference type="ChEBI" id="CHEBI:18420"/>
    </cofactor>
    <text evidence="1">Binds 2 magnesium ions per subunit.</text>
</comment>
<comment type="pathway">
    <text evidence="6">Amino-acid biosynthesis; L-pyrrolysine biosynthesis.</text>
</comment>
<comment type="similarity">
    <text evidence="5">Belongs to the PylC family.</text>
</comment>
<organism>
    <name type="scientific">Methanosarcina mazei (strain ATCC BAA-159 / DSM 3647 / Goe1 / Go1 / JCM 11833 / OCM 88)</name>
    <name type="common">Methanosarcina frisia</name>
    <dbReference type="NCBI Taxonomy" id="192952"/>
    <lineage>
        <taxon>Archaea</taxon>
        <taxon>Methanobacteriati</taxon>
        <taxon>Methanobacteriota</taxon>
        <taxon>Stenosarchaea group</taxon>
        <taxon>Methanomicrobia</taxon>
        <taxon>Methanosarcinales</taxon>
        <taxon>Methanosarcinaceae</taxon>
        <taxon>Methanosarcina</taxon>
    </lineage>
</organism>
<reference key="1">
    <citation type="journal article" date="2002" name="J. Mol. Microbiol. Biotechnol.">
        <title>The genome of Methanosarcina mazei: evidence for lateral gene transfer between Bacteria and Archaea.</title>
        <authorList>
            <person name="Deppenmeier U."/>
            <person name="Johann A."/>
            <person name="Hartsch T."/>
            <person name="Merkl R."/>
            <person name="Schmitz R.A."/>
            <person name="Martinez-Arias R."/>
            <person name="Henne A."/>
            <person name="Wiezer A."/>
            <person name="Baeumer S."/>
            <person name="Jacobi C."/>
            <person name="Brueggemann H."/>
            <person name="Lienard T."/>
            <person name="Christmann A."/>
            <person name="Boemecke M."/>
            <person name="Steckel S."/>
            <person name="Bhattacharyya A."/>
            <person name="Lykidis A."/>
            <person name="Overbeek R."/>
            <person name="Klenk H.-P."/>
            <person name="Gunsalus R.P."/>
            <person name="Fritz H.-J."/>
            <person name="Gottschalk G."/>
        </authorList>
    </citation>
    <scope>NUCLEOTIDE SEQUENCE [LARGE SCALE GENOMIC DNA]</scope>
    <source>
        <strain>ATCC BAA-159 / DSM 3647 / Goe1 / Go1 / JCM 11833 / OCM 88</strain>
    </source>
</reference>
<reference key="2">
    <citation type="journal article" date="2011" name="Nat. Chem. Biol.">
        <title>D-Ornithine coopts pyrrolysine biosynthesis to make and insert pyrroline-carboxy-lysine.</title>
        <authorList>
            <person name="Cellitti S.E."/>
            <person name="Ou W."/>
            <person name="Chiu H.P."/>
            <person name="Gruenewald J."/>
            <person name="Jones D.H."/>
            <person name="Hao X."/>
            <person name="Fan Q."/>
            <person name="Quinn L.L."/>
            <person name="Ng K."/>
            <person name="Anfora A.T."/>
            <person name="Lesley S.A."/>
            <person name="Uno T."/>
            <person name="Brock A."/>
            <person name="Geierstanger B.H."/>
        </authorList>
    </citation>
    <scope>FUNCTION</scope>
    <scope>CATALYTIC ACTIVITY</scope>
</reference>
<evidence type="ECO:0000250" key="1">
    <source>
        <dbReference type="UniProtKB" id="Q46E79"/>
    </source>
</evidence>
<evidence type="ECO:0000255" key="2">
    <source>
        <dbReference type="PROSITE-ProRule" id="PRU00409"/>
    </source>
</evidence>
<evidence type="ECO:0000269" key="3">
    <source>
    </source>
</evidence>
<evidence type="ECO:0000303" key="4">
    <source>
    </source>
</evidence>
<evidence type="ECO:0000305" key="5"/>
<evidence type="ECO:0000305" key="6">
    <source>
    </source>
</evidence>
<evidence type="ECO:0000312" key="7">
    <source>
        <dbReference type="EMBL" id="AAM31139.1"/>
    </source>
</evidence>
<sequence>MRESWGASLKTICLIGGKLQGFEAAYLSKKAGMKVLVIDKNPQALIRNYADEFQCFNITEEPEKLVAISKNVDAILPVNENLECIEFLNSIKEKFSCPVLFDFEAYRISRDKRKSKEYFASIGTPTPQDKPSEPPYFVKPPCESSSVGARIIHDRKELKELEPGMLIEEYVEGEVVSLEVIGDGNNFAVVKETLVHIDDTYDCHMVTPLPLDPSFRELSYSLAANLPLKGIMDVEAISGPLGLKVIEIDARFPSQTPTAVYYSSGINLIELLFRAFNGGIEEIKTLPEDRYCIYEHLMLAENGVLIPVGEQVLSMGNDYGNYYEEPGIEIFLCKGENPVFTLVFWGRDREEAEARKNKGLSILKSRFGAAA</sequence>
<gene>
    <name evidence="4" type="primary">pylC</name>
    <name evidence="7" type="ordered locus">MM_1443</name>
</gene>